<comment type="function">
    <text evidence="1">Interacts with the SecY protein in vivo. May bind preferentially to an uncomplexed state of SecY, thus functioning either as a chelating agent for excess SecY in the cell or as a regulatory factor that negatively controls the translocase function.</text>
</comment>
<comment type="subcellular location">
    <subcellularLocation>
        <location evidence="1">Cell inner membrane</location>
        <topology evidence="1">Peripheral membrane protein</topology>
        <orientation evidence="1">Cytoplasmic side</orientation>
    </subcellularLocation>
    <text evidence="1">Loosely associated with the cytoplasmic side of the inner membrane, probably via SecY.</text>
</comment>
<comment type="similarity">
    <text evidence="1">Belongs to the Syd family.</text>
</comment>
<comment type="sequence caution" evidence="2">
    <conflict type="erroneous initiation">
        <sequence resource="EMBL-CDS" id="ABJ02220"/>
    </conflict>
</comment>
<gene>
    <name evidence="1" type="primary">syd</name>
    <name type="ordered locus">Ecok1_27260</name>
    <name type="ORF">APECO1_3738</name>
</gene>
<sequence>MDDLTAQALKDFTARYCDAWHEEHKSWPLSEELYGVPSPCIISTTEDAVYWQPQPFTGEQNVNAVERAFDIVIQPTIHTFYTTQFAGDMHAQFGDIKLTLLQTWSEDDFRRVQENLIGHLVTQKRLKLPPTLFIATLEEELEVISVCNLSGEVCKETLGTRKRTHLASNLAEFLNQLKPLL</sequence>
<dbReference type="EMBL" id="CP000468">
    <property type="protein sequence ID" value="ABJ02220.1"/>
    <property type="status" value="ALT_INIT"/>
    <property type="molecule type" value="Genomic_DNA"/>
</dbReference>
<dbReference type="RefSeq" id="WP_000342431.1">
    <property type="nucleotide sequence ID" value="NZ_CADILS010000024.1"/>
</dbReference>
<dbReference type="SMR" id="A1AEY0"/>
<dbReference type="GeneID" id="93779205"/>
<dbReference type="KEGG" id="ecv:APECO1_3738"/>
<dbReference type="HOGENOM" id="CLU_2395052_0_0_6"/>
<dbReference type="Proteomes" id="UP000008216">
    <property type="component" value="Chromosome"/>
</dbReference>
<dbReference type="GO" id="GO:0009898">
    <property type="term" value="C:cytoplasmic side of plasma membrane"/>
    <property type="evidence" value="ECO:0007669"/>
    <property type="project" value="InterPro"/>
</dbReference>
<dbReference type="CDD" id="cd16323">
    <property type="entry name" value="Syd"/>
    <property type="match status" value="1"/>
</dbReference>
<dbReference type="FunFam" id="3.40.1580.20:FF:000001">
    <property type="entry name" value="Protein Syd"/>
    <property type="match status" value="1"/>
</dbReference>
<dbReference type="Gene3D" id="3.40.1580.20">
    <property type="entry name" value="Syd protein"/>
    <property type="match status" value="1"/>
</dbReference>
<dbReference type="HAMAP" id="MF_01104">
    <property type="entry name" value="Syd"/>
    <property type="match status" value="1"/>
</dbReference>
<dbReference type="InterPro" id="IPR009948">
    <property type="entry name" value="Syd"/>
</dbReference>
<dbReference type="InterPro" id="IPR038228">
    <property type="entry name" value="Syd_sf"/>
</dbReference>
<dbReference type="NCBIfam" id="NF003439">
    <property type="entry name" value="PRK04968.1"/>
    <property type="match status" value="1"/>
</dbReference>
<dbReference type="Pfam" id="PF07348">
    <property type="entry name" value="Syd"/>
    <property type="match status" value="1"/>
</dbReference>
<feature type="chain" id="PRO_0000298249" description="Protein Syd">
    <location>
        <begin position="1"/>
        <end position="181"/>
    </location>
</feature>
<organism>
    <name type="scientific">Escherichia coli O1:K1 / APEC</name>
    <dbReference type="NCBI Taxonomy" id="405955"/>
    <lineage>
        <taxon>Bacteria</taxon>
        <taxon>Pseudomonadati</taxon>
        <taxon>Pseudomonadota</taxon>
        <taxon>Gammaproteobacteria</taxon>
        <taxon>Enterobacterales</taxon>
        <taxon>Enterobacteriaceae</taxon>
        <taxon>Escherichia</taxon>
    </lineage>
</organism>
<proteinExistence type="inferred from homology"/>
<name>SYDP_ECOK1</name>
<keyword id="KW-0997">Cell inner membrane</keyword>
<keyword id="KW-1003">Cell membrane</keyword>
<keyword id="KW-0472">Membrane</keyword>
<keyword id="KW-1185">Reference proteome</keyword>
<reference key="1">
    <citation type="journal article" date="2007" name="J. Bacteriol.">
        <title>The genome sequence of avian pathogenic Escherichia coli strain O1:K1:H7 shares strong similarities with human extraintestinal pathogenic E. coli genomes.</title>
        <authorList>
            <person name="Johnson T.J."/>
            <person name="Kariyawasam S."/>
            <person name="Wannemuehler Y."/>
            <person name="Mangiamele P."/>
            <person name="Johnson S.J."/>
            <person name="Doetkott C."/>
            <person name="Skyberg J.A."/>
            <person name="Lynne A.M."/>
            <person name="Johnson J.R."/>
            <person name="Nolan L.K."/>
        </authorList>
    </citation>
    <scope>NUCLEOTIDE SEQUENCE [LARGE SCALE GENOMIC DNA]</scope>
</reference>
<protein>
    <recommendedName>
        <fullName evidence="1">Protein Syd</fullName>
    </recommendedName>
</protein>
<accession>A1AEY0</accession>
<evidence type="ECO:0000255" key="1">
    <source>
        <dbReference type="HAMAP-Rule" id="MF_01104"/>
    </source>
</evidence>
<evidence type="ECO:0000305" key="2"/>